<gene>
    <name evidence="1" type="primary">atpC</name>
    <name type="ordered locus">FTA_1901</name>
</gene>
<comment type="function">
    <text evidence="1">Produces ATP from ADP in the presence of a proton gradient across the membrane.</text>
</comment>
<comment type="subunit">
    <text evidence="1">F-type ATPases have 2 components, CF(1) - the catalytic core - and CF(0) - the membrane proton channel. CF(1) has five subunits: alpha(3), beta(3), gamma(1), delta(1), epsilon(1). CF(0) has three main subunits: a, b and c.</text>
</comment>
<comment type="subcellular location">
    <subcellularLocation>
        <location evidence="1">Cell inner membrane</location>
        <topology evidence="1">Peripheral membrane protein</topology>
    </subcellularLocation>
</comment>
<comment type="similarity">
    <text evidence="1">Belongs to the ATPase epsilon chain family.</text>
</comment>
<dbReference type="EMBL" id="CP000803">
    <property type="protein sequence ID" value="ABU62376.1"/>
    <property type="molecule type" value="Genomic_DNA"/>
</dbReference>
<dbReference type="RefSeq" id="WP_003017331.1">
    <property type="nucleotide sequence ID" value="NC_009749.1"/>
</dbReference>
<dbReference type="SMR" id="A7NEH3"/>
<dbReference type="KEGG" id="fta:FTA_1901"/>
<dbReference type="HOGENOM" id="CLU_084338_2_1_6"/>
<dbReference type="GO" id="GO:0005886">
    <property type="term" value="C:plasma membrane"/>
    <property type="evidence" value="ECO:0007669"/>
    <property type="project" value="UniProtKB-SubCell"/>
</dbReference>
<dbReference type="GO" id="GO:0045259">
    <property type="term" value="C:proton-transporting ATP synthase complex"/>
    <property type="evidence" value="ECO:0007669"/>
    <property type="project" value="UniProtKB-KW"/>
</dbReference>
<dbReference type="GO" id="GO:0005524">
    <property type="term" value="F:ATP binding"/>
    <property type="evidence" value="ECO:0007669"/>
    <property type="project" value="UniProtKB-UniRule"/>
</dbReference>
<dbReference type="GO" id="GO:0046933">
    <property type="term" value="F:proton-transporting ATP synthase activity, rotational mechanism"/>
    <property type="evidence" value="ECO:0007669"/>
    <property type="project" value="UniProtKB-UniRule"/>
</dbReference>
<dbReference type="CDD" id="cd12152">
    <property type="entry name" value="F1-ATPase_delta"/>
    <property type="match status" value="1"/>
</dbReference>
<dbReference type="Gene3D" id="2.60.15.10">
    <property type="entry name" value="F0F1 ATP synthase delta/epsilon subunit, N-terminal"/>
    <property type="match status" value="1"/>
</dbReference>
<dbReference type="HAMAP" id="MF_00530">
    <property type="entry name" value="ATP_synth_epsil_bac"/>
    <property type="match status" value="1"/>
</dbReference>
<dbReference type="InterPro" id="IPR001469">
    <property type="entry name" value="ATP_synth_F1_dsu/esu"/>
</dbReference>
<dbReference type="InterPro" id="IPR020546">
    <property type="entry name" value="ATP_synth_F1_dsu/esu_N"/>
</dbReference>
<dbReference type="InterPro" id="IPR036771">
    <property type="entry name" value="ATPsynth_dsu/esu_N"/>
</dbReference>
<dbReference type="NCBIfam" id="TIGR01216">
    <property type="entry name" value="ATP_synt_epsi"/>
    <property type="match status" value="1"/>
</dbReference>
<dbReference type="NCBIfam" id="NF009986">
    <property type="entry name" value="PRK13452.1"/>
    <property type="match status" value="1"/>
</dbReference>
<dbReference type="PANTHER" id="PTHR13822">
    <property type="entry name" value="ATP SYNTHASE DELTA/EPSILON CHAIN"/>
    <property type="match status" value="1"/>
</dbReference>
<dbReference type="PANTHER" id="PTHR13822:SF10">
    <property type="entry name" value="ATP SYNTHASE EPSILON CHAIN, CHLOROPLASTIC"/>
    <property type="match status" value="1"/>
</dbReference>
<dbReference type="Pfam" id="PF02823">
    <property type="entry name" value="ATP-synt_DE_N"/>
    <property type="match status" value="1"/>
</dbReference>
<dbReference type="SUPFAM" id="SSF51344">
    <property type="entry name" value="Epsilon subunit of F1F0-ATP synthase N-terminal domain"/>
    <property type="match status" value="1"/>
</dbReference>
<name>ATPE_FRATF</name>
<sequence length="145" mass="15737">MTKKYLKVDVVSPLGSVFKGEADMVSLRGSAGEMGIVYGHTELLSTLPAGVVNVRKGQHTDVLYVSGGIVEVTPTRVTIMVDDMERAENLNQAEAEKARARAKEVLKNPDASKLDIEAANKRLKEADARLKALNSSNGLYYSKDD</sequence>
<reference key="1">
    <citation type="journal article" date="2009" name="PLoS ONE">
        <title>Complete genome sequence of Francisella tularensis subspecies holarctica FTNF002-00.</title>
        <authorList>
            <person name="Barabote R.D."/>
            <person name="Xie G."/>
            <person name="Brettin T.S."/>
            <person name="Hinrichs S.H."/>
            <person name="Fey P.D."/>
            <person name="Jay J.J."/>
            <person name="Engle J.L."/>
            <person name="Godbole S.D."/>
            <person name="Noronha J.M."/>
            <person name="Scheuermann R.H."/>
            <person name="Zhou L.W."/>
            <person name="Lion C."/>
            <person name="Dempsey M.P."/>
        </authorList>
    </citation>
    <scope>NUCLEOTIDE SEQUENCE [LARGE SCALE GENOMIC DNA]</scope>
    <source>
        <strain>FTNF002-00 / FTA</strain>
    </source>
</reference>
<organism>
    <name type="scientific">Francisella tularensis subsp. holarctica (strain FTNF002-00 / FTA)</name>
    <dbReference type="NCBI Taxonomy" id="458234"/>
    <lineage>
        <taxon>Bacteria</taxon>
        <taxon>Pseudomonadati</taxon>
        <taxon>Pseudomonadota</taxon>
        <taxon>Gammaproteobacteria</taxon>
        <taxon>Thiotrichales</taxon>
        <taxon>Francisellaceae</taxon>
        <taxon>Francisella</taxon>
    </lineage>
</organism>
<evidence type="ECO:0000255" key="1">
    <source>
        <dbReference type="HAMAP-Rule" id="MF_00530"/>
    </source>
</evidence>
<feature type="chain" id="PRO_1000056482" description="ATP synthase epsilon chain">
    <location>
        <begin position="1"/>
        <end position="145"/>
    </location>
</feature>
<protein>
    <recommendedName>
        <fullName evidence="1">ATP synthase epsilon chain</fullName>
    </recommendedName>
    <alternativeName>
        <fullName evidence="1">ATP synthase F1 sector epsilon subunit</fullName>
    </alternativeName>
    <alternativeName>
        <fullName evidence="1">F-ATPase epsilon subunit</fullName>
    </alternativeName>
</protein>
<accession>A7NEH3</accession>
<proteinExistence type="inferred from homology"/>
<keyword id="KW-0066">ATP synthesis</keyword>
<keyword id="KW-0997">Cell inner membrane</keyword>
<keyword id="KW-1003">Cell membrane</keyword>
<keyword id="KW-0139">CF(1)</keyword>
<keyword id="KW-0375">Hydrogen ion transport</keyword>
<keyword id="KW-0406">Ion transport</keyword>
<keyword id="KW-0472">Membrane</keyword>
<keyword id="KW-0813">Transport</keyword>